<reference key="1">
    <citation type="journal article" date="1995" name="Arch. Microbiol.">
        <title>Cloning and sequencing of the genes encoding the light-harvesting B806-866 polypeptides and initial studies on the transcriptional organization of puf2B, puf2A and puf2C in Chloroflexus aurantiacus.</title>
        <authorList>
            <person name="Watanabe Y."/>
            <person name="Feick R.G."/>
            <person name="Shiozawa J.A."/>
        </authorList>
    </citation>
    <scope>NUCLEOTIDE SEQUENCE [GENOMIC DNA]</scope>
</reference>
<reference key="2">
    <citation type="journal article" date="1987" name="FEBS Lett.">
        <title>The complete amino acid sequence of the antenna polypeptide B806-866-beta from the cytoplasmic membrane of the green bacterium Chloroflexus aurantiacus.</title>
        <authorList>
            <person name="Wechsler T.D."/>
            <person name="Brunisholz R.A."/>
            <person name="Frank G."/>
            <person name="Suter F."/>
            <person name="Zuber H."/>
        </authorList>
    </citation>
    <scope>PROTEIN SEQUENCE</scope>
    <scope>FORMYLATION AT MET-1</scope>
</reference>
<reference key="3">
    <citation type="journal article" date="2011" name="BMC Genomics">
        <title>Complete genome sequence of the filamentous anoxygenic phototrophic bacterium Chloroflexus aurantiacus.</title>
        <authorList>
            <person name="Tang K.H."/>
            <person name="Barry K."/>
            <person name="Chertkov O."/>
            <person name="Dalin E."/>
            <person name="Han C.S."/>
            <person name="Hauser L.J."/>
            <person name="Honchak B.M."/>
            <person name="Karbach L.E."/>
            <person name="Land M.L."/>
            <person name="Lapidus A."/>
            <person name="Larimer F.W."/>
            <person name="Mikhailova N."/>
            <person name="Pitluck S."/>
            <person name="Pierson B.K."/>
            <person name="Blankenship R.E."/>
        </authorList>
    </citation>
    <scope>NUCLEOTIDE SEQUENCE [LARGE SCALE GENOMIC DNA]</scope>
    <source>
        <strain>ATCC 29366 / DSM 635 / J-10-fl</strain>
    </source>
</reference>
<accession>P09927</accession>
<accession>A9WEY8</accession>
<name>LHB_CHLAA</name>
<evidence type="ECO:0000255" key="1"/>
<evidence type="ECO:0000269" key="2">
    <source ref="2"/>
</evidence>
<evidence type="ECO:0000305" key="3"/>
<protein>
    <recommendedName>
        <fullName>Light-harvesting protein B-808/866 beta chain</fullName>
    </recommendedName>
    <alternativeName>
        <fullName>Antenna pigment protein beta chain</fullName>
    </alternativeName>
    <alternativeName>
        <fullName>Bacteriochlorophyll a-binding protein</fullName>
    </alternativeName>
</protein>
<sequence length="53" mass="6320">MRDDDDLVPPKWRPLFNNQDWLLHDIVVKSFYGFGVIAAIAHLLVYLWKPWLP</sequence>
<proteinExistence type="evidence at protein level"/>
<organism>
    <name type="scientific">Chloroflexus aurantiacus (strain ATCC 29366 / DSM 635 / J-10-fl)</name>
    <dbReference type="NCBI Taxonomy" id="324602"/>
    <lineage>
        <taxon>Bacteria</taxon>
        <taxon>Bacillati</taxon>
        <taxon>Chloroflexota</taxon>
        <taxon>Chloroflexia</taxon>
        <taxon>Chloroflexales</taxon>
        <taxon>Chloroflexineae</taxon>
        <taxon>Chloroflexaceae</taxon>
        <taxon>Chloroflexus</taxon>
    </lineage>
</organism>
<dbReference type="EMBL" id="X73899">
    <property type="protein sequence ID" value="CAA52104.1"/>
    <property type="molecule type" value="Genomic_DNA"/>
</dbReference>
<dbReference type="EMBL" id="CP000909">
    <property type="protein sequence ID" value="ABY35303.1"/>
    <property type="molecule type" value="Genomic_DNA"/>
</dbReference>
<dbReference type="PIR" id="A25857">
    <property type="entry name" value="A25857"/>
</dbReference>
<dbReference type="RefSeq" id="YP_001635692.1">
    <property type="nucleotide sequence ID" value="NC_010175.1"/>
</dbReference>
<dbReference type="PDB" id="8YDM">
    <property type="method" value="EM"/>
    <property type="resolution" value="3.05 A"/>
    <property type="chains" value="B/E/G/I/K/P/R=1-53"/>
</dbReference>
<dbReference type="PDBsum" id="8YDM"/>
<dbReference type="EMDB" id="EMD-39177"/>
<dbReference type="SMR" id="P09927"/>
<dbReference type="STRING" id="324602.Caur_2091"/>
<dbReference type="EnsemblBacteria" id="ABY35303">
    <property type="protein sequence ID" value="ABY35303"/>
    <property type="gene ID" value="Caur_2091"/>
</dbReference>
<dbReference type="KEGG" id="cau:Caur_2091"/>
<dbReference type="PATRIC" id="fig|324602.8.peg.2371"/>
<dbReference type="eggNOG" id="ENOG5030UXX">
    <property type="taxonomic scope" value="Bacteria"/>
</dbReference>
<dbReference type="HOGENOM" id="CLU_3029560_0_0_0"/>
<dbReference type="InParanoid" id="P09927"/>
<dbReference type="Proteomes" id="UP000002008">
    <property type="component" value="Chromosome"/>
</dbReference>
<dbReference type="GO" id="GO:0005886">
    <property type="term" value="C:plasma membrane"/>
    <property type="evidence" value="ECO:0007669"/>
    <property type="project" value="UniProtKB-SubCell"/>
</dbReference>
<dbReference type="GO" id="GO:0030077">
    <property type="term" value="C:plasma membrane light-harvesting complex"/>
    <property type="evidence" value="ECO:0007669"/>
    <property type="project" value="InterPro"/>
</dbReference>
<dbReference type="GO" id="GO:0042314">
    <property type="term" value="F:bacteriochlorophyll binding"/>
    <property type="evidence" value="ECO:0007669"/>
    <property type="project" value="UniProtKB-KW"/>
</dbReference>
<dbReference type="GO" id="GO:0045156">
    <property type="term" value="F:electron transporter, transferring electrons within the cyclic electron transport pathway of photosynthesis activity"/>
    <property type="evidence" value="ECO:0007669"/>
    <property type="project" value="InterPro"/>
</dbReference>
<dbReference type="GO" id="GO:0046872">
    <property type="term" value="F:metal ion binding"/>
    <property type="evidence" value="ECO:0007669"/>
    <property type="project" value="UniProtKB-KW"/>
</dbReference>
<dbReference type="GO" id="GO:0019684">
    <property type="term" value="P:photosynthesis, light reaction"/>
    <property type="evidence" value="ECO:0007669"/>
    <property type="project" value="InterPro"/>
</dbReference>
<dbReference type="Gene3D" id="1.20.5.250">
    <property type="match status" value="1"/>
</dbReference>
<dbReference type="InterPro" id="IPR000066">
    <property type="entry name" value="Antenna_a/b"/>
</dbReference>
<dbReference type="InterPro" id="IPR023623">
    <property type="entry name" value="Antenna_beta_CS"/>
</dbReference>
<dbReference type="InterPro" id="IPR023624">
    <property type="entry name" value="Antenna_beta_dom_sf"/>
</dbReference>
<dbReference type="InterPro" id="IPR002362">
    <property type="entry name" value="LHB-1/5"/>
</dbReference>
<dbReference type="InterPro" id="IPR035889">
    <property type="entry name" value="Light-harvesting_complex"/>
</dbReference>
<dbReference type="NCBIfam" id="NF040862">
    <property type="entry name" value="pufB_517_ASD"/>
    <property type="match status" value="1"/>
</dbReference>
<dbReference type="Pfam" id="PF00556">
    <property type="entry name" value="LHC"/>
    <property type="match status" value="1"/>
</dbReference>
<dbReference type="PIRSF" id="PIRSF002900">
    <property type="entry name" value="Antenna_beta"/>
    <property type="match status" value="1"/>
</dbReference>
<dbReference type="SUPFAM" id="SSF56918">
    <property type="entry name" value="Light-harvesting complex subunits"/>
    <property type="match status" value="1"/>
</dbReference>
<dbReference type="PROSITE" id="PS00969">
    <property type="entry name" value="ANTENNA_COMP_BETA"/>
    <property type="match status" value="1"/>
</dbReference>
<keyword id="KW-0002">3D-structure</keyword>
<keyword id="KW-0042">Antenna complex</keyword>
<keyword id="KW-0076">Bacteriochlorophyll</keyword>
<keyword id="KW-1003">Cell membrane</keyword>
<keyword id="KW-0148">Chlorophyll</keyword>
<keyword id="KW-0157">Chromophore</keyword>
<keyword id="KW-0903">Direct protein sequencing</keyword>
<keyword id="KW-0291">Formylation</keyword>
<keyword id="KW-0437">Light-harvesting polypeptide</keyword>
<keyword id="KW-0460">Magnesium</keyword>
<keyword id="KW-0472">Membrane</keyword>
<keyword id="KW-0479">Metal-binding</keyword>
<keyword id="KW-1185">Reference proteome</keyword>
<keyword id="KW-0812">Transmembrane</keyword>
<keyword id="KW-1133">Transmembrane helix</keyword>
<gene>
    <name type="primary">puf2B</name>
    <name type="ordered locus">Caur_2091</name>
</gene>
<comment type="function">
    <text>Antenna complexes are light-harvesting systems, which transfer the excitation energy to the reaction centers.</text>
</comment>
<comment type="subunit">
    <text>The core complex is formed by different alpha and beta chains, binding bacteriochlorophyll molecules, and arranged most probably in tetrameric structures disposed around the reaction center. The non-pigmented gamma chains may constitute additional components.</text>
</comment>
<comment type="subcellular location">
    <subcellularLocation>
        <location>Cell membrane</location>
        <topology>Single-pass type II membrane protein</topology>
    </subcellularLocation>
</comment>
<comment type="similarity">
    <text evidence="3">Belongs to the antenna complex beta subunit family.</text>
</comment>
<feature type="chain" id="PRO_0000099809" description="Light-harvesting protein B-808/866 beta chain">
    <location>
        <begin position="1"/>
        <end position="53"/>
    </location>
</feature>
<feature type="topological domain" description="Cytoplasmic" evidence="1">
    <location>
        <begin position="1"/>
        <end position="25"/>
    </location>
</feature>
<feature type="transmembrane region" description="Helical" evidence="1">
    <location>
        <begin position="26"/>
        <end position="48"/>
    </location>
</feature>
<feature type="topological domain" description="Periplasmic" evidence="1">
    <location>
        <begin position="49"/>
        <end position="53"/>
    </location>
</feature>
<feature type="binding site" description="axial binding residue" evidence="1">
    <location>
        <position position="24"/>
    </location>
    <ligand>
        <name>a bacteriochlorophyll</name>
        <dbReference type="ChEBI" id="CHEBI:38201"/>
    </ligand>
    <ligandPart>
        <name>Mg</name>
        <dbReference type="ChEBI" id="CHEBI:25107"/>
    </ligandPart>
</feature>
<feature type="binding site" description="axial binding residue" evidence="1">
    <location>
        <position position="42"/>
    </location>
    <ligand>
        <name>a bacteriochlorophyll</name>
        <dbReference type="ChEBI" id="CHEBI:38201"/>
    </ligand>
    <ligandPart>
        <name>Mg</name>
        <dbReference type="ChEBI" id="CHEBI:25107"/>
    </ligandPart>
</feature>
<feature type="modified residue" description="N-formylmethionine" evidence="2">
    <location>
        <position position="1"/>
    </location>
</feature>